<dbReference type="EC" id="3.4.23.36" evidence="1"/>
<dbReference type="EMBL" id="CP001176">
    <property type="protein sequence ID" value="ACK62063.1"/>
    <property type="molecule type" value="Genomic_DNA"/>
</dbReference>
<dbReference type="RefSeq" id="WP_000642183.1">
    <property type="nucleotide sequence ID" value="NC_011725.1"/>
</dbReference>
<dbReference type="SMR" id="B7H6M9"/>
<dbReference type="KEGG" id="bcb:BCB4264_A3994"/>
<dbReference type="HOGENOM" id="CLU_083252_3_0_9"/>
<dbReference type="UniPathway" id="UPA00665"/>
<dbReference type="Proteomes" id="UP000007096">
    <property type="component" value="Chromosome"/>
</dbReference>
<dbReference type="GO" id="GO:0005886">
    <property type="term" value="C:plasma membrane"/>
    <property type="evidence" value="ECO:0007669"/>
    <property type="project" value="UniProtKB-SubCell"/>
</dbReference>
<dbReference type="GO" id="GO:0004190">
    <property type="term" value="F:aspartic-type endopeptidase activity"/>
    <property type="evidence" value="ECO:0007669"/>
    <property type="project" value="UniProtKB-UniRule"/>
</dbReference>
<dbReference type="GO" id="GO:0006508">
    <property type="term" value="P:proteolysis"/>
    <property type="evidence" value="ECO:0007669"/>
    <property type="project" value="UniProtKB-KW"/>
</dbReference>
<dbReference type="HAMAP" id="MF_00161">
    <property type="entry name" value="LspA"/>
    <property type="match status" value="1"/>
</dbReference>
<dbReference type="InterPro" id="IPR001872">
    <property type="entry name" value="Peptidase_A8"/>
</dbReference>
<dbReference type="NCBIfam" id="TIGR00077">
    <property type="entry name" value="lspA"/>
    <property type="match status" value="1"/>
</dbReference>
<dbReference type="PANTHER" id="PTHR33695">
    <property type="entry name" value="LIPOPROTEIN SIGNAL PEPTIDASE"/>
    <property type="match status" value="1"/>
</dbReference>
<dbReference type="PANTHER" id="PTHR33695:SF1">
    <property type="entry name" value="LIPOPROTEIN SIGNAL PEPTIDASE"/>
    <property type="match status" value="1"/>
</dbReference>
<dbReference type="Pfam" id="PF01252">
    <property type="entry name" value="Peptidase_A8"/>
    <property type="match status" value="1"/>
</dbReference>
<dbReference type="PRINTS" id="PR00781">
    <property type="entry name" value="LIPOSIGPTASE"/>
</dbReference>
<dbReference type="PROSITE" id="PS00855">
    <property type="entry name" value="SPASE_II"/>
    <property type="match status" value="1"/>
</dbReference>
<name>LSPA_BACC4</name>
<comment type="function">
    <text evidence="1">This protein specifically catalyzes the removal of signal peptides from prolipoproteins.</text>
</comment>
<comment type="catalytic activity">
    <reaction evidence="1">
        <text>Release of signal peptides from bacterial membrane prolipoproteins. Hydrolyzes -Xaa-Yaa-Zaa-|-(S,diacylglyceryl)Cys-, in which Xaa is hydrophobic (preferably Leu), and Yaa (Ala or Ser) and Zaa (Gly or Ala) have small, neutral side chains.</text>
        <dbReference type="EC" id="3.4.23.36"/>
    </reaction>
</comment>
<comment type="pathway">
    <text evidence="1">Protein modification; lipoprotein biosynthesis (signal peptide cleavage).</text>
</comment>
<comment type="subcellular location">
    <subcellularLocation>
        <location evidence="1">Cell membrane</location>
        <topology evidence="1">Multi-pass membrane protein</topology>
    </subcellularLocation>
</comment>
<comment type="similarity">
    <text evidence="1">Belongs to the peptidase A8 family.</text>
</comment>
<protein>
    <recommendedName>
        <fullName evidence="1">Lipoprotein signal peptidase</fullName>
        <ecNumber evidence="1">3.4.23.36</ecNumber>
    </recommendedName>
    <alternativeName>
        <fullName evidence="1">Prolipoprotein signal peptidase</fullName>
    </alternativeName>
    <alternativeName>
        <fullName evidence="1">Signal peptidase II</fullName>
        <shortName evidence="1">SPase II</shortName>
    </alternativeName>
</protein>
<keyword id="KW-0064">Aspartyl protease</keyword>
<keyword id="KW-1003">Cell membrane</keyword>
<keyword id="KW-0378">Hydrolase</keyword>
<keyword id="KW-0472">Membrane</keyword>
<keyword id="KW-0645">Protease</keyword>
<keyword id="KW-0812">Transmembrane</keyword>
<keyword id="KW-1133">Transmembrane helix</keyword>
<proteinExistence type="inferred from homology"/>
<feature type="chain" id="PRO_1000190790" description="Lipoprotein signal peptidase">
    <location>
        <begin position="1"/>
        <end position="152"/>
    </location>
</feature>
<feature type="transmembrane region" description="Helical" evidence="1">
    <location>
        <begin position="55"/>
        <end position="75"/>
    </location>
</feature>
<feature type="transmembrane region" description="Helical" evidence="1">
    <location>
        <begin position="85"/>
        <end position="105"/>
    </location>
</feature>
<feature type="transmembrane region" description="Helical" evidence="1">
    <location>
        <begin position="124"/>
        <end position="144"/>
    </location>
</feature>
<feature type="active site" evidence="1">
    <location>
        <position position="111"/>
    </location>
</feature>
<feature type="active site" evidence="1">
    <location>
        <position position="129"/>
    </location>
</feature>
<evidence type="ECO:0000255" key="1">
    <source>
        <dbReference type="HAMAP-Rule" id="MF_00161"/>
    </source>
</evidence>
<reference key="1">
    <citation type="submission" date="2008-10" db="EMBL/GenBank/DDBJ databases">
        <title>Genome sequence of Bacillus cereus B4264.</title>
        <authorList>
            <person name="Dodson R.J."/>
            <person name="Durkin A.S."/>
            <person name="Rosovitz M.J."/>
            <person name="Rasko D.A."/>
            <person name="Hoffmaster A."/>
            <person name="Ravel J."/>
            <person name="Sutton G."/>
        </authorList>
    </citation>
    <scope>NUCLEOTIDE SEQUENCE [LARGE SCALE GENOMIC DNA]</scope>
    <source>
        <strain>B4264</strain>
    </source>
</reference>
<gene>
    <name evidence="1" type="primary">lspA</name>
    <name type="ordered locus">BCB4264_A3994</name>
</gene>
<accession>B7H6M9</accession>
<sequence length="152" mass="17442">MIYYVIALFVIAIDQISKWLIVKNMELGTSIPIIDNVLYITSHRNRGAAWGILENKMWFFYIITVVFVVFIVFYMKKYAKTDKLLGISLGLILGGAMGNFIDRVFRQEVVDFIHVYIFSYNYPVFNIADSALCIGVVLIIIQTLLEGKKAKE</sequence>
<organism>
    <name type="scientific">Bacillus cereus (strain B4264)</name>
    <dbReference type="NCBI Taxonomy" id="405532"/>
    <lineage>
        <taxon>Bacteria</taxon>
        <taxon>Bacillati</taxon>
        <taxon>Bacillota</taxon>
        <taxon>Bacilli</taxon>
        <taxon>Bacillales</taxon>
        <taxon>Bacillaceae</taxon>
        <taxon>Bacillus</taxon>
        <taxon>Bacillus cereus group</taxon>
    </lineage>
</organism>